<reference key="1">
    <citation type="journal article" date="2005" name="Science">
        <title>The transcriptional landscape of the mammalian genome.</title>
        <authorList>
            <person name="Carninci P."/>
            <person name="Kasukawa T."/>
            <person name="Katayama S."/>
            <person name="Gough J."/>
            <person name="Frith M.C."/>
            <person name="Maeda N."/>
            <person name="Oyama R."/>
            <person name="Ravasi T."/>
            <person name="Lenhard B."/>
            <person name="Wells C."/>
            <person name="Kodzius R."/>
            <person name="Shimokawa K."/>
            <person name="Bajic V.B."/>
            <person name="Brenner S.E."/>
            <person name="Batalov S."/>
            <person name="Forrest A.R."/>
            <person name="Zavolan M."/>
            <person name="Davis M.J."/>
            <person name="Wilming L.G."/>
            <person name="Aidinis V."/>
            <person name="Allen J.E."/>
            <person name="Ambesi-Impiombato A."/>
            <person name="Apweiler R."/>
            <person name="Aturaliya R.N."/>
            <person name="Bailey T.L."/>
            <person name="Bansal M."/>
            <person name="Baxter L."/>
            <person name="Beisel K.W."/>
            <person name="Bersano T."/>
            <person name="Bono H."/>
            <person name="Chalk A.M."/>
            <person name="Chiu K.P."/>
            <person name="Choudhary V."/>
            <person name="Christoffels A."/>
            <person name="Clutterbuck D.R."/>
            <person name="Crowe M.L."/>
            <person name="Dalla E."/>
            <person name="Dalrymple B.P."/>
            <person name="de Bono B."/>
            <person name="Della Gatta G."/>
            <person name="di Bernardo D."/>
            <person name="Down T."/>
            <person name="Engstrom P."/>
            <person name="Fagiolini M."/>
            <person name="Faulkner G."/>
            <person name="Fletcher C.F."/>
            <person name="Fukushima T."/>
            <person name="Furuno M."/>
            <person name="Futaki S."/>
            <person name="Gariboldi M."/>
            <person name="Georgii-Hemming P."/>
            <person name="Gingeras T.R."/>
            <person name="Gojobori T."/>
            <person name="Green R.E."/>
            <person name="Gustincich S."/>
            <person name="Harbers M."/>
            <person name="Hayashi Y."/>
            <person name="Hensch T.K."/>
            <person name="Hirokawa N."/>
            <person name="Hill D."/>
            <person name="Huminiecki L."/>
            <person name="Iacono M."/>
            <person name="Ikeo K."/>
            <person name="Iwama A."/>
            <person name="Ishikawa T."/>
            <person name="Jakt M."/>
            <person name="Kanapin A."/>
            <person name="Katoh M."/>
            <person name="Kawasawa Y."/>
            <person name="Kelso J."/>
            <person name="Kitamura H."/>
            <person name="Kitano H."/>
            <person name="Kollias G."/>
            <person name="Krishnan S.P."/>
            <person name="Kruger A."/>
            <person name="Kummerfeld S.K."/>
            <person name="Kurochkin I.V."/>
            <person name="Lareau L.F."/>
            <person name="Lazarevic D."/>
            <person name="Lipovich L."/>
            <person name="Liu J."/>
            <person name="Liuni S."/>
            <person name="McWilliam S."/>
            <person name="Madan Babu M."/>
            <person name="Madera M."/>
            <person name="Marchionni L."/>
            <person name="Matsuda H."/>
            <person name="Matsuzawa S."/>
            <person name="Miki H."/>
            <person name="Mignone F."/>
            <person name="Miyake S."/>
            <person name="Morris K."/>
            <person name="Mottagui-Tabar S."/>
            <person name="Mulder N."/>
            <person name="Nakano N."/>
            <person name="Nakauchi H."/>
            <person name="Ng P."/>
            <person name="Nilsson R."/>
            <person name="Nishiguchi S."/>
            <person name="Nishikawa S."/>
            <person name="Nori F."/>
            <person name="Ohara O."/>
            <person name="Okazaki Y."/>
            <person name="Orlando V."/>
            <person name="Pang K.C."/>
            <person name="Pavan W.J."/>
            <person name="Pavesi G."/>
            <person name="Pesole G."/>
            <person name="Petrovsky N."/>
            <person name="Piazza S."/>
            <person name="Reed J."/>
            <person name="Reid J.F."/>
            <person name="Ring B.Z."/>
            <person name="Ringwald M."/>
            <person name="Rost B."/>
            <person name="Ruan Y."/>
            <person name="Salzberg S.L."/>
            <person name="Sandelin A."/>
            <person name="Schneider C."/>
            <person name="Schoenbach C."/>
            <person name="Sekiguchi K."/>
            <person name="Semple C.A."/>
            <person name="Seno S."/>
            <person name="Sessa L."/>
            <person name="Sheng Y."/>
            <person name="Shibata Y."/>
            <person name="Shimada H."/>
            <person name="Shimada K."/>
            <person name="Silva D."/>
            <person name="Sinclair B."/>
            <person name="Sperling S."/>
            <person name="Stupka E."/>
            <person name="Sugiura K."/>
            <person name="Sultana R."/>
            <person name="Takenaka Y."/>
            <person name="Taki K."/>
            <person name="Tammoja K."/>
            <person name="Tan S.L."/>
            <person name="Tang S."/>
            <person name="Taylor M.S."/>
            <person name="Tegner J."/>
            <person name="Teichmann S.A."/>
            <person name="Ueda H.R."/>
            <person name="van Nimwegen E."/>
            <person name="Verardo R."/>
            <person name="Wei C.L."/>
            <person name="Yagi K."/>
            <person name="Yamanishi H."/>
            <person name="Zabarovsky E."/>
            <person name="Zhu S."/>
            <person name="Zimmer A."/>
            <person name="Hide W."/>
            <person name="Bult C."/>
            <person name="Grimmond S.M."/>
            <person name="Teasdale R.D."/>
            <person name="Liu E.T."/>
            <person name="Brusic V."/>
            <person name="Quackenbush J."/>
            <person name="Wahlestedt C."/>
            <person name="Mattick J.S."/>
            <person name="Hume D.A."/>
            <person name="Kai C."/>
            <person name="Sasaki D."/>
            <person name="Tomaru Y."/>
            <person name="Fukuda S."/>
            <person name="Kanamori-Katayama M."/>
            <person name="Suzuki M."/>
            <person name="Aoki J."/>
            <person name="Arakawa T."/>
            <person name="Iida J."/>
            <person name="Imamura K."/>
            <person name="Itoh M."/>
            <person name="Kato T."/>
            <person name="Kawaji H."/>
            <person name="Kawagashira N."/>
            <person name="Kawashima T."/>
            <person name="Kojima M."/>
            <person name="Kondo S."/>
            <person name="Konno H."/>
            <person name="Nakano K."/>
            <person name="Ninomiya N."/>
            <person name="Nishio T."/>
            <person name="Okada M."/>
            <person name="Plessy C."/>
            <person name="Shibata K."/>
            <person name="Shiraki T."/>
            <person name="Suzuki S."/>
            <person name="Tagami M."/>
            <person name="Waki K."/>
            <person name="Watahiki A."/>
            <person name="Okamura-Oho Y."/>
            <person name="Suzuki H."/>
            <person name="Kawai J."/>
            <person name="Hayashizaki Y."/>
        </authorList>
    </citation>
    <scope>NUCLEOTIDE SEQUENCE [LARGE SCALE MRNA]</scope>
    <source>
        <strain>C57BL/6J</strain>
        <tissue>Embryo</tissue>
        <tissue>Hippocampus</tissue>
        <tissue>Small intestine</tissue>
        <tissue>Testis</tissue>
    </source>
</reference>
<reference key="2">
    <citation type="journal article" date="2004" name="Genome Res.">
        <title>The status, quality, and expansion of the NIH full-length cDNA project: the Mammalian Gene Collection (MGC).</title>
        <authorList>
            <consortium name="The MGC Project Team"/>
        </authorList>
    </citation>
    <scope>NUCLEOTIDE SEQUENCE [LARGE SCALE MRNA]</scope>
    <source>
        <strain>C57BL/6J</strain>
        <tissue>Mammary gland</tissue>
        <tissue>Retina</tissue>
    </source>
</reference>
<reference key="3">
    <citation type="journal article" date="2010" name="Cell">
        <title>A tissue-specific atlas of mouse protein phosphorylation and expression.</title>
        <authorList>
            <person name="Huttlin E.L."/>
            <person name="Jedrychowski M.P."/>
            <person name="Elias J.E."/>
            <person name="Goswami T."/>
            <person name="Rad R."/>
            <person name="Beausoleil S.A."/>
            <person name="Villen J."/>
            <person name="Haas W."/>
            <person name="Sowa M.E."/>
            <person name="Gygi S.P."/>
        </authorList>
    </citation>
    <scope>PHOSPHORYLATION [LARGE SCALE ANALYSIS] AT SER-216</scope>
    <scope>IDENTIFICATION BY MASS SPECTROMETRY [LARGE SCALE ANALYSIS]</scope>
    <source>
        <tissue>Brain</tissue>
        <tissue>Brown adipose tissue</tissue>
        <tissue>Kidney</tissue>
        <tissue>Lung</tissue>
        <tissue>Spleen</tissue>
        <tissue>Testis</tissue>
    </source>
</reference>
<reference key="4">
    <citation type="journal article" date="2015" name="Sci. Rep.">
        <title>Zwint-1 is required for spindle assembly checkpoint function and kinetochore-microtubule attachment during oocyte meiosis.</title>
        <authorList>
            <person name="Woo Seo D."/>
            <person name="Yeop You S."/>
            <person name="Chung W.J."/>
            <person name="Cho D.H."/>
            <person name="Kim J.S."/>
            <person name="Su Oh J."/>
        </authorList>
    </citation>
    <scope>FUNCTION</scope>
    <scope>SUBCELLULAR LOCATION</scope>
</reference>
<comment type="function">
    <text evidence="1 5">Acts as a component of the outer kinetochore KNL1 complex that serves as a docking point for spindle assembly checkpoint components and mediates microtubule-kinetochore interactions. Kinetochores, consisting of a centromere-associated inner segment and a microtubule-contacting outer segment, play a crucial role in chromosome segregation by mediating the physical connection between centromeric DNA and spindle microtubules. The outer kinetochore is made up of the ten-subunit KMN network, comprising the MIS12, NDC80 and KNL1 complexes, and auxiliary microtubule-associated components; together they connect the outer kinetochore with the inner kinetochore, bind microtubules, and mediate interactions with mitotic checkpoint proteins that delay anaphase until chromosomes are bioriented on the spindle (By similarity). Targets the RZZ complex to the kinetochore at prometaphase (By similarity). Recruits MAD2L1 to the kinetochore, but is not required for BUB1B localization (PubMed:26486467). In addition to orienting mitotic chromosomes, it is also essential for alignment of homologous chromosomes during meiotic metaphase I (PubMed:26486467). In meiosis I, required to activate the spindle assembly checkpoint at unattached kinetochores to correct erroneous kinetochore-microtubule attachments (PubMed:26486467).</text>
</comment>
<comment type="subunit">
    <text evidence="1">Component of the KNL1 complex composed of KNL1 and ZWINT. Part of the ten-subunit outer kinetochore KMN network that includes the KNL1, MIS12 and NDC80 complexes; a bioriented kinetochore contains approximately 150 copies of the network. Interacts with the MIS12 complex subunits MIS12 DSN1, and PMF1. Interacts with the NDC80 complex subunit NDC80 during mitosis. Interacts with ZW10. Interacts with CETN3.</text>
</comment>
<comment type="subcellular location">
    <subcellularLocation>
        <location evidence="1">Nucleus</location>
    </subcellularLocation>
    <subcellularLocation>
        <location evidence="5">Chromosome</location>
        <location evidence="5">Centromere</location>
        <location evidence="5">Kinetochore</location>
    </subcellularLocation>
    <text evidence="1 5">Localizes to kinetochores from late prophase to anaphase (By similarity). Localizes to kinetochores both during mitosis and meiosis (PubMed:26486467).</text>
</comment>
<evidence type="ECO:0000250" key="1">
    <source>
        <dbReference type="UniProtKB" id="O95229"/>
    </source>
</evidence>
<evidence type="ECO:0000250" key="2">
    <source>
        <dbReference type="UniProtKB" id="Q8VIL3"/>
    </source>
</evidence>
<evidence type="ECO:0000255" key="3"/>
<evidence type="ECO:0000256" key="4">
    <source>
        <dbReference type="SAM" id="MobiDB-lite"/>
    </source>
</evidence>
<evidence type="ECO:0000269" key="5">
    <source>
    </source>
</evidence>
<evidence type="ECO:0000305" key="6"/>
<evidence type="ECO:0007744" key="7">
    <source>
    </source>
</evidence>
<protein>
    <recommendedName>
        <fullName evidence="6">Outer kinetochore KNL1 complex subunit ZWINT</fullName>
    </recommendedName>
    <alternativeName>
        <fullName>ZW10 interactor</fullName>
    </alternativeName>
    <alternativeName>
        <fullName>ZW10-interacting protein 1</fullName>
        <shortName>Zwint-1</shortName>
    </alternativeName>
</protein>
<proteinExistence type="evidence at protein level"/>
<name>ZWINT_MOUSE</name>
<sequence>MADAEKNAVAEKNNAVATKEVLAEAAAILEPVGLQEEAELPAKIMEEFMRNSRKKDKLLCSQLQVVNFLQTFLAQEDTEQSPDALASEDASRQKATETKEQWKDMKATYMDHVDVIKCALSEALPQVKEAHRKYTELQKAFEQLEAKKRVLEEKLQLAQKQWVLQQKRLQNLTKISAEVKRRRKRALEKLDGSHQELETLKQQAGQEQEKLQRNQSYLQLLCSLQNKLVISEGKAEDKDVKGRALTAKSKSP</sequence>
<organism>
    <name type="scientific">Mus musculus</name>
    <name type="common">Mouse</name>
    <dbReference type="NCBI Taxonomy" id="10090"/>
    <lineage>
        <taxon>Eukaryota</taxon>
        <taxon>Metazoa</taxon>
        <taxon>Chordata</taxon>
        <taxon>Craniata</taxon>
        <taxon>Vertebrata</taxon>
        <taxon>Euteleostomi</taxon>
        <taxon>Mammalia</taxon>
        <taxon>Eutheria</taxon>
        <taxon>Euarchontoglires</taxon>
        <taxon>Glires</taxon>
        <taxon>Rodentia</taxon>
        <taxon>Myomorpha</taxon>
        <taxon>Muroidea</taxon>
        <taxon>Muridae</taxon>
        <taxon>Murinae</taxon>
        <taxon>Mus</taxon>
        <taxon>Mus</taxon>
    </lineage>
</organism>
<accession>Q9CQU5</accession>
<accession>Q3UYT8</accession>
<accession>Q91VI4</accession>
<accession>Q9D0W9</accession>
<dbReference type="EMBL" id="AK004305">
    <property type="protein sequence ID" value="BAB23256.1"/>
    <property type="molecule type" value="mRNA"/>
</dbReference>
<dbReference type="EMBL" id="AK008144">
    <property type="protein sequence ID" value="BAB25492.1"/>
    <property type="molecule type" value="mRNA"/>
</dbReference>
<dbReference type="EMBL" id="AK013556">
    <property type="protein sequence ID" value="BAB28904.1"/>
    <property type="molecule type" value="mRNA"/>
</dbReference>
<dbReference type="EMBL" id="AK075977">
    <property type="protein sequence ID" value="BAC36090.1"/>
    <property type="molecule type" value="mRNA"/>
</dbReference>
<dbReference type="EMBL" id="AK134380">
    <property type="protein sequence ID" value="BAE22123.1"/>
    <property type="molecule type" value="mRNA"/>
</dbReference>
<dbReference type="EMBL" id="BC013559">
    <property type="protein sequence ID" value="AAH13559.1"/>
    <property type="molecule type" value="mRNA"/>
</dbReference>
<dbReference type="EMBL" id="BC027100">
    <property type="protein sequence ID" value="AAH27100.1"/>
    <property type="molecule type" value="mRNA"/>
</dbReference>
<dbReference type="EMBL" id="BC034870">
    <property type="protein sequence ID" value="AAH34870.1"/>
    <property type="molecule type" value="mRNA"/>
</dbReference>
<dbReference type="CCDS" id="CCDS23920.1"/>
<dbReference type="RefSeq" id="NP_001280612.1">
    <property type="nucleotide sequence ID" value="NM_001293683.1"/>
</dbReference>
<dbReference type="RefSeq" id="NP_001280613.1">
    <property type="nucleotide sequence ID" value="NM_001293684.1"/>
</dbReference>
<dbReference type="RefSeq" id="NP_079911.1">
    <property type="nucleotide sequence ID" value="NM_025635.4"/>
</dbReference>
<dbReference type="SMR" id="Q9CQU5"/>
<dbReference type="BioGRID" id="206739">
    <property type="interactions" value="31"/>
</dbReference>
<dbReference type="ComplexPortal" id="CPX-5702">
    <property type="entry name" value="Kinetochore KNL1 complex"/>
</dbReference>
<dbReference type="FunCoup" id="Q9CQU5">
    <property type="interactions" value="1173"/>
</dbReference>
<dbReference type="IntAct" id="Q9CQU5">
    <property type="interactions" value="22"/>
</dbReference>
<dbReference type="STRING" id="10090.ENSMUSP00000101071"/>
<dbReference type="GlyGen" id="Q9CQU5">
    <property type="glycosylation" value="1 site, 1 O-linked glycan (1 site)"/>
</dbReference>
<dbReference type="iPTMnet" id="Q9CQU5"/>
<dbReference type="PhosphoSitePlus" id="Q9CQU5"/>
<dbReference type="SwissPalm" id="Q9CQU5"/>
<dbReference type="PaxDb" id="10090-ENSMUSP00000101071"/>
<dbReference type="PeptideAtlas" id="Q9CQU5"/>
<dbReference type="ProteomicsDB" id="302155"/>
<dbReference type="Pumba" id="Q9CQU5"/>
<dbReference type="Antibodypedia" id="28018">
    <property type="antibodies" value="273 antibodies from 31 providers"/>
</dbReference>
<dbReference type="DNASU" id="52696"/>
<dbReference type="Ensembl" id="ENSMUST00000020081.11">
    <property type="protein sequence ID" value="ENSMUSP00000020081.5"/>
    <property type="gene ID" value="ENSMUSG00000019923.15"/>
</dbReference>
<dbReference type="Ensembl" id="ENSMUST00000105431.8">
    <property type="protein sequence ID" value="ENSMUSP00000101071.2"/>
    <property type="gene ID" value="ENSMUSG00000019923.15"/>
</dbReference>
<dbReference type="Ensembl" id="ENSMUST00000160337.2">
    <property type="protein sequence ID" value="ENSMUSP00000124429.2"/>
    <property type="gene ID" value="ENSMUSG00000019923.15"/>
</dbReference>
<dbReference type="GeneID" id="52696"/>
<dbReference type="KEGG" id="mmu:52696"/>
<dbReference type="UCSC" id="uc007foy.2">
    <property type="organism name" value="mouse"/>
</dbReference>
<dbReference type="AGR" id="MGI:1289227"/>
<dbReference type="CTD" id="11130"/>
<dbReference type="MGI" id="MGI:1289227">
    <property type="gene designation" value="Zwint"/>
</dbReference>
<dbReference type="VEuPathDB" id="HostDB:ENSMUSG00000019923"/>
<dbReference type="eggNOG" id="ENOG502S6PG">
    <property type="taxonomic scope" value="Eukaryota"/>
</dbReference>
<dbReference type="GeneTree" id="ENSGT00390000017639"/>
<dbReference type="HOGENOM" id="CLU_089675_0_0_1"/>
<dbReference type="InParanoid" id="Q9CQU5"/>
<dbReference type="OMA" id="TEAKEQW"/>
<dbReference type="OrthoDB" id="9893446at2759"/>
<dbReference type="PhylomeDB" id="Q9CQU5"/>
<dbReference type="TreeFam" id="TF338101"/>
<dbReference type="Reactome" id="R-MMU-141444">
    <property type="pathway name" value="Amplification of signal from unattached kinetochores via a MAD2 inhibitory signal"/>
</dbReference>
<dbReference type="Reactome" id="R-MMU-2467813">
    <property type="pathway name" value="Separation of Sister Chromatids"/>
</dbReference>
<dbReference type="Reactome" id="R-MMU-2500257">
    <property type="pathway name" value="Resolution of Sister Chromatid Cohesion"/>
</dbReference>
<dbReference type="Reactome" id="R-MMU-5663220">
    <property type="pathway name" value="RHO GTPases Activate Formins"/>
</dbReference>
<dbReference type="Reactome" id="R-MMU-68877">
    <property type="pathway name" value="Mitotic Prometaphase"/>
</dbReference>
<dbReference type="Reactome" id="R-MMU-9648025">
    <property type="pathway name" value="EML4 and NUDC in mitotic spindle formation"/>
</dbReference>
<dbReference type="BioGRID-ORCS" id="52696">
    <property type="hits" value="21 hits in 79 CRISPR screens"/>
</dbReference>
<dbReference type="ChiTaRS" id="Zwint">
    <property type="organism name" value="mouse"/>
</dbReference>
<dbReference type="PRO" id="PR:Q9CQU5"/>
<dbReference type="Proteomes" id="UP000000589">
    <property type="component" value="Chromosome 10"/>
</dbReference>
<dbReference type="RNAct" id="Q9CQU5">
    <property type="molecule type" value="protein"/>
</dbReference>
<dbReference type="Bgee" id="ENSMUSG00000019923">
    <property type="expression patterns" value="Expressed in ventromedial nucleus of hypothalamus and 277 other cell types or tissues"/>
</dbReference>
<dbReference type="ExpressionAtlas" id="Q9CQU5">
    <property type="expression patterns" value="baseline and differential"/>
</dbReference>
<dbReference type="GO" id="GO:0030425">
    <property type="term" value="C:dendrite"/>
    <property type="evidence" value="ECO:0007669"/>
    <property type="project" value="Ensembl"/>
</dbReference>
<dbReference type="GO" id="GO:0000776">
    <property type="term" value="C:kinetochore"/>
    <property type="evidence" value="ECO:0000314"/>
    <property type="project" value="UniProtKB"/>
</dbReference>
<dbReference type="GO" id="GO:0180019">
    <property type="term" value="C:Knl1/Spc105 complex"/>
    <property type="evidence" value="ECO:0000250"/>
    <property type="project" value="UniProtKB"/>
</dbReference>
<dbReference type="GO" id="GO:0005634">
    <property type="term" value="C:nucleus"/>
    <property type="evidence" value="ECO:0007669"/>
    <property type="project" value="UniProtKB-SubCell"/>
</dbReference>
<dbReference type="GO" id="GO:0051301">
    <property type="term" value="P:cell division"/>
    <property type="evidence" value="ECO:0007669"/>
    <property type="project" value="UniProtKB-KW"/>
</dbReference>
<dbReference type="GO" id="GO:0031619">
    <property type="term" value="P:homologous chromosome orientation in meiotic metaphase I"/>
    <property type="evidence" value="ECO:0000315"/>
    <property type="project" value="UniProtKB"/>
</dbReference>
<dbReference type="GO" id="GO:1905325">
    <property type="term" value="P:regulation of meiosis I spindle assembly checkpoint"/>
    <property type="evidence" value="ECO:0000315"/>
    <property type="project" value="UniProtKB"/>
</dbReference>
<dbReference type="Gene3D" id="1.20.5.4090">
    <property type="match status" value="1"/>
</dbReference>
<dbReference type="InterPro" id="IPR029092">
    <property type="entry name" value="Zwint-1"/>
</dbReference>
<dbReference type="PANTHER" id="PTHR31504:SF1">
    <property type="entry name" value="ZW10 INTERACTOR"/>
    <property type="match status" value="1"/>
</dbReference>
<dbReference type="PANTHER" id="PTHR31504">
    <property type="entry name" value="ZW10 INTERACTOR ZWINT"/>
    <property type="match status" value="1"/>
</dbReference>
<dbReference type="Pfam" id="PF15556">
    <property type="entry name" value="Zwint"/>
    <property type="match status" value="1"/>
</dbReference>
<gene>
    <name type="primary">Zwint</name>
    <name type="synonym">D10Ertd749e</name>
</gene>
<keyword id="KW-0131">Cell cycle</keyword>
<keyword id="KW-0132">Cell division</keyword>
<keyword id="KW-0137">Centromere</keyword>
<keyword id="KW-0158">Chromosome</keyword>
<keyword id="KW-0175">Coiled coil</keyword>
<keyword id="KW-0995">Kinetochore</keyword>
<keyword id="KW-0498">Mitosis</keyword>
<keyword id="KW-0539">Nucleus</keyword>
<keyword id="KW-0597">Phosphoprotein</keyword>
<keyword id="KW-1185">Reference proteome</keyword>
<feature type="chain" id="PRO_0000066595" description="Outer kinetochore KNL1 complex subunit ZWINT">
    <location>
        <begin position="1"/>
        <end position="252"/>
    </location>
</feature>
<feature type="region of interest" description="Disordered" evidence="4">
    <location>
        <begin position="80"/>
        <end position="99"/>
    </location>
</feature>
<feature type="coiled-coil region" evidence="3">
    <location>
        <begin position="120"/>
        <end position="221"/>
    </location>
</feature>
<feature type="compositionally biased region" description="Basic and acidic residues" evidence="4">
    <location>
        <begin position="89"/>
        <end position="99"/>
    </location>
</feature>
<feature type="modified residue" description="Phosphoserine" evidence="7">
    <location>
        <position position="216"/>
    </location>
</feature>
<feature type="modified residue" description="Phosphoserine" evidence="2">
    <location>
        <position position="249"/>
    </location>
</feature>
<feature type="sequence conflict" description="In Ref. 2; AAH13559." evidence="6" ref="2">
    <original>MADAEKN</original>
    <variation>PTRP</variation>
    <location>
        <begin position="1"/>
        <end position="7"/>
    </location>
</feature>